<comment type="similarity">
    <text evidence="1">Belongs to the SlyX family.</text>
</comment>
<gene>
    <name evidence="1" type="primary">slyX</name>
    <name type="ordered locus">SF3366</name>
    <name type="ordered locus">S4396</name>
</gene>
<proteinExistence type="inferred from homology"/>
<dbReference type="EMBL" id="AE005674">
    <property type="protein sequence ID" value="AAN44829.1"/>
    <property type="molecule type" value="Genomic_DNA"/>
</dbReference>
<dbReference type="EMBL" id="AE014073">
    <property type="protein sequence ID" value="AAP19348.1"/>
    <property type="molecule type" value="Genomic_DNA"/>
</dbReference>
<dbReference type="RefSeq" id="NP_709122.1">
    <property type="nucleotide sequence ID" value="NC_004337.2"/>
</dbReference>
<dbReference type="RefSeq" id="WP_001153613.1">
    <property type="nucleotide sequence ID" value="NZ_WPGW01000003.1"/>
</dbReference>
<dbReference type="SMR" id="Q83PY1"/>
<dbReference type="STRING" id="198214.SF3366"/>
<dbReference type="PaxDb" id="198214-SF3366"/>
<dbReference type="GeneID" id="1026546"/>
<dbReference type="KEGG" id="sfl:SF3366"/>
<dbReference type="KEGG" id="sfx:S4396"/>
<dbReference type="PATRIC" id="fig|198214.7.peg.3976"/>
<dbReference type="HOGENOM" id="CLU_180796_4_2_6"/>
<dbReference type="Proteomes" id="UP000001006">
    <property type="component" value="Chromosome"/>
</dbReference>
<dbReference type="Proteomes" id="UP000002673">
    <property type="component" value="Chromosome"/>
</dbReference>
<dbReference type="Gene3D" id="1.20.5.300">
    <property type="match status" value="1"/>
</dbReference>
<dbReference type="HAMAP" id="MF_00715">
    <property type="entry name" value="SlyX"/>
    <property type="match status" value="1"/>
</dbReference>
<dbReference type="InterPro" id="IPR007236">
    <property type="entry name" value="SlyX"/>
</dbReference>
<dbReference type="NCBIfam" id="NF002750">
    <property type="entry name" value="PRK02793.1"/>
    <property type="match status" value="1"/>
</dbReference>
<dbReference type="PANTHER" id="PTHR36508">
    <property type="entry name" value="PROTEIN SLYX"/>
    <property type="match status" value="1"/>
</dbReference>
<dbReference type="PANTHER" id="PTHR36508:SF1">
    <property type="entry name" value="PROTEIN SLYX"/>
    <property type="match status" value="1"/>
</dbReference>
<dbReference type="Pfam" id="PF04102">
    <property type="entry name" value="SlyX"/>
    <property type="match status" value="1"/>
</dbReference>
<accession>Q83PY1</accession>
<sequence length="72" mass="8184">MQDLSLEARLAELESRLAFQEITIEELNVTVAAHEMEMAKLRDHLRLLTEKLKASQPSNIASQAEETPPPHY</sequence>
<evidence type="ECO:0000255" key="1">
    <source>
        <dbReference type="HAMAP-Rule" id="MF_00715"/>
    </source>
</evidence>
<evidence type="ECO:0000256" key="2">
    <source>
        <dbReference type="SAM" id="MobiDB-lite"/>
    </source>
</evidence>
<name>SLYX_SHIFL</name>
<organism>
    <name type="scientific">Shigella flexneri</name>
    <dbReference type="NCBI Taxonomy" id="623"/>
    <lineage>
        <taxon>Bacteria</taxon>
        <taxon>Pseudomonadati</taxon>
        <taxon>Pseudomonadota</taxon>
        <taxon>Gammaproteobacteria</taxon>
        <taxon>Enterobacterales</taxon>
        <taxon>Enterobacteriaceae</taxon>
        <taxon>Shigella</taxon>
    </lineage>
</organism>
<keyword id="KW-1185">Reference proteome</keyword>
<protein>
    <recommendedName>
        <fullName evidence="1">Protein SlyX</fullName>
    </recommendedName>
</protein>
<reference key="1">
    <citation type="journal article" date="2002" name="Nucleic Acids Res.">
        <title>Genome sequence of Shigella flexneri 2a: insights into pathogenicity through comparison with genomes of Escherichia coli K12 and O157.</title>
        <authorList>
            <person name="Jin Q."/>
            <person name="Yuan Z."/>
            <person name="Xu J."/>
            <person name="Wang Y."/>
            <person name="Shen Y."/>
            <person name="Lu W."/>
            <person name="Wang J."/>
            <person name="Liu H."/>
            <person name="Yang J."/>
            <person name="Yang F."/>
            <person name="Zhang X."/>
            <person name="Zhang J."/>
            <person name="Yang G."/>
            <person name="Wu H."/>
            <person name="Qu D."/>
            <person name="Dong J."/>
            <person name="Sun L."/>
            <person name="Xue Y."/>
            <person name="Zhao A."/>
            <person name="Gao Y."/>
            <person name="Zhu J."/>
            <person name="Kan B."/>
            <person name="Ding K."/>
            <person name="Chen S."/>
            <person name="Cheng H."/>
            <person name="Yao Z."/>
            <person name="He B."/>
            <person name="Chen R."/>
            <person name="Ma D."/>
            <person name="Qiang B."/>
            <person name="Wen Y."/>
            <person name="Hou Y."/>
            <person name="Yu J."/>
        </authorList>
    </citation>
    <scope>NUCLEOTIDE SEQUENCE [LARGE SCALE GENOMIC DNA]</scope>
    <source>
        <strain>301 / Serotype 2a</strain>
    </source>
</reference>
<reference key="2">
    <citation type="journal article" date="2003" name="Infect. Immun.">
        <title>Complete genome sequence and comparative genomics of Shigella flexneri serotype 2a strain 2457T.</title>
        <authorList>
            <person name="Wei J."/>
            <person name="Goldberg M.B."/>
            <person name="Burland V."/>
            <person name="Venkatesan M.M."/>
            <person name="Deng W."/>
            <person name="Fournier G."/>
            <person name="Mayhew G.F."/>
            <person name="Plunkett G. III"/>
            <person name="Rose D.J."/>
            <person name="Darling A."/>
            <person name="Mau B."/>
            <person name="Perna N.T."/>
            <person name="Payne S.M."/>
            <person name="Runyen-Janecky L.J."/>
            <person name="Zhou S."/>
            <person name="Schwartz D.C."/>
            <person name="Blattner F.R."/>
        </authorList>
    </citation>
    <scope>NUCLEOTIDE SEQUENCE [LARGE SCALE GENOMIC DNA]</scope>
    <source>
        <strain>ATCC 700930 / 2457T / Serotype 2a</strain>
    </source>
</reference>
<feature type="chain" id="PRO_0000209215" description="Protein SlyX">
    <location>
        <begin position="1"/>
        <end position="72"/>
    </location>
</feature>
<feature type="region of interest" description="Disordered" evidence="2">
    <location>
        <begin position="53"/>
        <end position="72"/>
    </location>
</feature>
<feature type="compositionally biased region" description="Polar residues" evidence="2">
    <location>
        <begin position="55"/>
        <end position="65"/>
    </location>
</feature>